<feature type="chain" id="PRO_0000057527" description="tRNA pseudouridine synthase 1">
    <location>
        <begin position="1"/>
        <end position="553"/>
    </location>
</feature>
<feature type="region of interest" description="Disordered" evidence="3">
    <location>
        <begin position="1"/>
        <end position="78"/>
    </location>
</feature>
<feature type="region of interest" description="Disordered" evidence="3">
    <location>
        <begin position="517"/>
        <end position="539"/>
    </location>
</feature>
<feature type="compositionally biased region" description="Basic and acidic residues" evidence="3">
    <location>
        <begin position="33"/>
        <end position="51"/>
    </location>
</feature>
<feature type="compositionally biased region" description="Basic and acidic residues" evidence="3">
    <location>
        <begin position="64"/>
        <end position="78"/>
    </location>
</feature>
<feature type="active site" description="Nucleophile" evidence="1">
    <location>
        <position position="158"/>
    </location>
</feature>
<evidence type="ECO:0000250" key="1">
    <source>
        <dbReference type="UniProtKB" id="P07649"/>
    </source>
</evidence>
<evidence type="ECO:0000250" key="2">
    <source>
        <dbReference type="UniProtKB" id="Q12211"/>
    </source>
</evidence>
<evidence type="ECO:0000256" key="3">
    <source>
        <dbReference type="SAM" id="MobiDB-lite"/>
    </source>
</evidence>
<evidence type="ECO:0000305" key="4"/>
<reference key="1">
    <citation type="journal article" date="2004" name="Nature">
        <title>Genome evolution in yeasts.</title>
        <authorList>
            <person name="Dujon B."/>
            <person name="Sherman D."/>
            <person name="Fischer G."/>
            <person name="Durrens P."/>
            <person name="Casaregola S."/>
            <person name="Lafontaine I."/>
            <person name="de Montigny J."/>
            <person name="Marck C."/>
            <person name="Neuveglise C."/>
            <person name="Talla E."/>
            <person name="Goffard N."/>
            <person name="Frangeul L."/>
            <person name="Aigle M."/>
            <person name="Anthouard V."/>
            <person name="Babour A."/>
            <person name="Barbe V."/>
            <person name="Barnay S."/>
            <person name="Blanchin S."/>
            <person name="Beckerich J.-M."/>
            <person name="Beyne E."/>
            <person name="Bleykasten C."/>
            <person name="Boisrame A."/>
            <person name="Boyer J."/>
            <person name="Cattolico L."/>
            <person name="Confanioleri F."/>
            <person name="de Daruvar A."/>
            <person name="Despons L."/>
            <person name="Fabre E."/>
            <person name="Fairhead C."/>
            <person name="Ferry-Dumazet H."/>
            <person name="Groppi A."/>
            <person name="Hantraye F."/>
            <person name="Hennequin C."/>
            <person name="Jauniaux N."/>
            <person name="Joyet P."/>
            <person name="Kachouri R."/>
            <person name="Kerrest A."/>
            <person name="Koszul R."/>
            <person name="Lemaire M."/>
            <person name="Lesur I."/>
            <person name="Ma L."/>
            <person name="Muller H."/>
            <person name="Nicaud J.-M."/>
            <person name="Nikolski M."/>
            <person name="Oztas S."/>
            <person name="Ozier-Kalogeropoulos O."/>
            <person name="Pellenz S."/>
            <person name="Potier S."/>
            <person name="Richard G.-F."/>
            <person name="Straub M.-L."/>
            <person name="Suleau A."/>
            <person name="Swennen D."/>
            <person name="Tekaia F."/>
            <person name="Wesolowski-Louvel M."/>
            <person name="Westhof E."/>
            <person name="Wirth B."/>
            <person name="Zeniou-Meyer M."/>
            <person name="Zivanovic Y."/>
            <person name="Bolotin-Fukuhara M."/>
            <person name="Thierry A."/>
            <person name="Bouchier C."/>
            <person name="Caudron B."/>
            <person name="Scarpelli C."/>
            <person name="Gaillardin C."/>
            <person name="Weissenbach J."/>
            <person name="Wincker P."/>
            <person name="Souciet J.-L."/>
        </authorList>
    </citation>
    <scope>NUCLEOTIDE SEQUENCE [LARGE SCALE GENOMIC DNA]</scope>
    <source>
        <strain>ATCC 8585 / CBS 2359 / DSM 70799 / NBRC 1267 / NRRL Y-1140 / WM37</strain>
    </source>
</reference>
<proteinExistence type="inferred from homology"/>
<accession>Q6CWQ8</accession>
<gene>
    <name type="primary">PUS1</name>
    <name type="ordered locus">KLLA0B02244g</name>
</gene>
<organism>
    <name type="scientific">Kluyveromyces lactis (strain ATCC 8585 / CBS 2359 / DSM 70799 / NBRC 1267 / NRRL Y-1140 / WM37)</name>
    <name type="common">Yeast</name>
    <name type="synonym">Candida sphaerica</name>
    <dbReference type="NCBI Taxonomy" id="284590"/>
    <lineage>
        <taxon>Eukaryota</taxon>
        <taxon>Fungi</taxon>
        <taxon>Dikarya</taxon>
        <taxon>Ascomycota</taxon>
        <taxon>Saccharomycotina</taxon>
        <taxon>Saccharomycetes</taxon>
        <taxon>Saccharomycetales</taxon>
        <taxon>Saccharomycetaceae</taxon>
        <taxon>Kluyveromyces</taxon>
    </lineage>
</organism>
<name>PUS1_KLULA</name>
<comment type="function">
    <text evidence="2">Formation of pseudouridine at positions 27 and 28 in the anticodon stem and loop of transfer RNAs; at positions 34 and 36 of intron-containing precursor tRNA(Ile) and at position 35 in the intron-containing tRNA(Tyr). Catalyzes pseudouridylation at position 44 in U2 snRNA. Also catalyzes pseudouridylation of mRNAs.</text>
</comment>
<comment type="catalytic activity">
    <reaction evidence="2">
        <text>a uridine in tRNA = a pseudouridine in tRNA</text>
        <dbReference type="Rhea" id="RHEA:54572"/>
        <dbReference type="Rhea" id="RHEA-COMP:13339"/>
        <dbReference type="Rhea" id="RHEA-COMP:13934"/>
        <dbReference type="ChEBI" id="CHEBI:65314"/>
        <dbReference type="ChEBI" id="CHEBI:65315"/>
    </reaction>
</comment>
<comment type="catalytic activity">
    <reaction evidence="2">
        <text>uridine in snRNA = pseudouridine in snRNA</text>
        <dbReference type="Rhea" id="RHEA:51124"/>
        <dbReference type="Rhea" id="RHEA-COMP:12891"/>
        <dbReference type="Rhea" id="RHEA-COMP:12892"/>
        <dbReference type="ChEBI" id="CHEBI:65314"/>
        <dbReference type="ChEBI" id="CHEBI:65315"/>
    </reaction>
</comment>
<comment type="catalytic activity">
    <reaction evidence="2">
        <text>a uridine in mRNA = a pseudouridine in mRNA</text>
        <dbReference type="Rhea" id="RHEA:56644"/>
        <dbReference type="Rhea" id="RHEA-COMP:14658"/>
        <dbReference type="Rhea" id="RHEA-COMP:14659"/>
        <dbReference type="ChEBI" id="CHEBI:65314"/>
        <dbReference type="ChEBI" id="CHEBI:65315"/>
    </reaction>
</comment>
<comment type="cofactor">
    <cofactor evidence="2">
        <name>Zn(2+)</name>
        <dbReference type="ChEBI" id="CHEBI:29105"/>
    </cofactor>
    <text evidence="2">Binds 1 zinc ion per subunit.</text>
</comment>
<comment type="subcellular location">
    <subcellularLocation>
        <location evidence="2">Nucleus</location>
    </subcellularLocation>
</comment>
<comment type="similarity">
    <text evidence="4">Belongs to the tRNA pseudouridine synthase TruA family.</text>
</comment>
<protein>
    <recommendedName>
        <fullName>tRNA pseudouridine synthase 1</fullName>
        <ecNumber evidence="2">5.4.99.-</ecNumber>
    </recommendedName>
    <alternativeName>
        <fullName>tRNA pseudouridylate synthase 1</fullName>
    </alternativeName>
    <alternativeName>
        <fullName>tRNA-uridine isomerase 1</fullName>
    </alternativeName>
</protein>
<keyword id="KW-0413">Isomerase</keyword>
<keyword id="KW-0479">Metal-binding</keyword>
<keyword id="KW-0507">mRNA processing</keyword>
<keyword id="KW-0539">Nucleus</keyword>
<keyword id="KW-1185">Reference proteome</keyword>
<keyword id="KW-0819">tRNA processing</keyword>
<keyword id="KW-0862">Zinc</keyword>
<dbReference type="EC" id="5.4.99.-" evidence="2"/>
<dbReference type="EMBL" id="CR382122">
    <property type="protein sequence ID" value="CAH02024.1"/>
    <property type="molecule type" value="Genomic_DNA"/>
</dbReference>
<dbReference type="RefSeq" id="XP_451631.1">
    <property type="nucleotide sequence ID" value="XM_451631.1"/>
</dbReference>
<dbReference type="SMR" id="Q6CWQ8"/>
<dbReference type="FunCoup" id="Q6CWQ8">
    <property type="interactions" value="1057"/>
</dbReference>
<dbReference type="STRING" id="284590.Q6CWQ8"/>
<dbReference type="PaxDb" id="284590-Q6CWQ8"/>
<dbReference type="KEGG" id="kla:KLLA0_B02244g"/>
<dbReference type="eggNOG" id="KOG2553">
    <property type="taxonomic scope" value="Eukaryota"/>
</dbReference>
<dbReference type="HOGENOM" id="CLU_021971_0_1_1"/>
<dbReference type="InParanoid" id="Q6CWQ8"/>
<dbReference type="OMA" id="NKAFDCR"/>
<dbReference type="Proteomes" id="UP000000598">
    <property type="component" value="Chromosome B"/>
</dbReference>
<dbReference type="GO" id="GO:0005634">
    <property type="term" value="C:nucleus"/>
    <property type="evidence" value="ECO:0007669"/>
    <property type="project" value="UniProtKB-SubCell"/>
</dbReference>
<dbReference type="GO" id="GO:0046872">
    <property type="term" value="F:metal ion binding"/>
    <property type="evidence" value="ECO:0007669"/>
    <property type="project" value="UniProtKB-KW"/>
</dbReference>
<dbReference type="GO" id="GO:0003723">
    <property type="term" value="F:RNA binding"/>
    <property type="evidence" value="ECO:0007669"/>
    <property type="project" value="InterPro"/>
</dbReference>
<dbReference type="GO" id="GO:0106032">
    <property type="term" value="F:snRNA pseudouridine synthase activity"/>
    <property type="evidence" value="ECO:0007669"/>
    <property type="project" value="RHEA"/>
</dbReference>
<dbReference type="GO" id="GO:0106029">
    <property type="term" value="F:tRNA pseudouridine synthase activity"/>
    <property type="evidence" value="ECO:0007669"/>
    <property type="project" value="RHEA"/>
</dbReference>
<dbReference type="GO" id="GO:0006397">
    <property type="term" value="P:mRNA processing"/>
    <property type="evidence" value="ECO:0007669"/>
    <property type="project" value="UniProtKB-KW"/>
</dbReference>
<dbReference type="GO" id="GO:1990481">
    <property type="term" value="P:mRNA pseudouridine synthesis"/>
    <property type="evidence" value="ECO:0007669"/>
    <property type="project" value="TreeGrafter"/>
</dbReference>
<dbReference type="GO" id="GO:0031119">
    <property type="term" value="P:tRNA pseudouridine synthesis"/>
    <property type="evidence" value="ECO:0007669"/>
    <property type="project" value="InterPro"/>
</dbReference>
<dbReference type="CDD" id="cd02568">
    <property type="entry name" value="PseudoU_synth_PUS1_PUS2"/>
    <property type="match status" value="1"/>
</dbReference>
<dbReference type="FunFam" id="3.30.70.580:FF:000002">
    <property type="entry name" value="tRNA pseudouridine synthase"/>
    <property type="match status" value="1"/>
</dbReference>
<dbReference type="FunFam" id="3.30.70.660:FF:000002">
    <property type="entry name" value="tRNA pseudouridine synthase"/>
    <property type="match status" value="1"/>
</dbReference>
<dbReference type="Gene3D" id="3.30.70.660">
    <property type="entry name" value="Pseudouridine synthase I, catalytic domain, C-terminal subdomain"/>
    <property type="match status" value="1"/>
</dbReference>
<dbReference type="Gene3D" id="3.30.70.580">
    <property type="entry name" value="Pseudouridine synthase I, catalytic domain, N-terminal subdomain"/>
    <property type="match status" value="1"/>
</dbReference>
<dbReference type="InterPro" id="IPR020103">
    <property type="entry name" value="PsdUridine_synth_cat_dom_sf"/>
</dbReference>
<dbReference type="InterPro" id="IPR001406">
    <property type="entry name" value="PsdUridine_synth_TruA"/>
</dbReference>
<dbReference type="InterPro" id="IPR020097">
    <property type="entry name" value="PsdUridine_synth_TruA_a/b_dom"/>
</dbReference>
<dbReference type="InterPro" id="IPR020095">
    <property type="entry name" value="PsdUridine_synth_TruA_C"/>
</dbReference>
<dbReference type="InterPro" id="IPR041708">
    <property type="entry name" value="PUS1/PUS2-like"/>
</dbReference>
<dbReference type="InterPro" id="IPR020094">
    <property type="entry name" value="TruA/RsuA/RluB/E/F_N"/>
</dbReference>
<dbReference type="NCBIfam" id="TIGR00071">
    <property type="entry name" value="hisT_truA"/>
    <property type="match status" value="1"/>
</dbReference>
<dbReference type="PANTHER" id="PTHR11142">
    <property type="entry name" value="PSEUDOURIDYLATE SYNTHASE"/>
    <property type="match status" value="1"/>
</dbReference>
<dbReference type="PANTHER" id="PTHR11142:SF4">
    <property type="entry name" value="PSEUDOURIDYLATE SYNTHASE 1 HOMOLOG"/>
    <property type="match status" value="1"/>
</dbReference>
<dbReference type="Pfam" id="PF01416">
    <property type="entry name" value="PseudoU_synth_1"/>
    <property type="match status" value="1"/>
</dbReference>
<dbReference type="SUPFAM" id="SSF55120">
    <property type="entry name" value="Pseudouridine synthase"/>
    <property type="match status" value="1"/>
</dbReference>
<sequence length="553" mass="63660">MSEEQNLRPVYDDDQPGEDTYKRGAIYKQTRSRKADYEDGENSEKRQKPNDTDNGPTAVVTDLSNEKKETRSKDKDESVALAVDADGNPIPQEVRLPKRKVAVMIGYCGTGYHGMQYNPPNDTIEKELFEAFVRAGAISKANSTDLKKNGFQRAARTDKGVHAGGNVISLKLIIEDPEVKEKINNELPDQIRVWDISRVNKAFDCRKMCSSRWYEYLLPTYSLIGPKPSTYLYNEIEASKKEIPNVIQDDVESAQFWEAFSTEAESKFTKEELEEIAAFVMPKDSFDENNETYQKSKAFKKLEAEHKRAYRISKERLDRFRSALKQYEGTFNFHNFTLGKDFNDPSAKRFMKQITVSEPFVIGEAKTEWVSIKIHGQSFMLHQIRKMISMATLITRCFSPLERIRQAYGQEKINIPKAPALGLLLEAPVYDGYNTRLQEFGYDPIDFSKYQSEMDTFKMKHIYDKIYLEEVNENVFNAFFSYIDTFNPSYNISQEQQQLKGQELQQPSQAVELVTEDLEQKAPSDPTPSDEKGKKPQRPIFDFLTARGIQLQD</sequence>